<keyword id="KW-0002">3D-structure</keyword>
<keyword id="KW-0119">Carbohydrate metabolism</keyword>
<keyword id="KW-0520">NAD</keyword>
<keyword id="KW-0521">NADP</keyword>
<keyword id="KW-0560">Oxidoreductase</keyword>
<keyword id="KW-0859">Xylose metabolism</keyword>
<accession>O74237</accession>
<organism>
    <name type="scientific">Candida tenuis</name>
    <name type="common">Yeast</name>
    <name type="synonym">Yamadazyma tenuis</name>
    <dbReference type="NCBI Taxonomy" id="2315449"/>
    <lineage>
        <taxon>Eukaryota</taxon>
        <taxon>Fungi</taxon>
        <taxon>Dikarya</taxon>
        <taxon>Ascomycota</taxon>
        <taxon>Saccharomycotina</taxon>
        <taxon>Pichiomycetes</taxon>
        <taxon>Debaryomycetaceae</taxon>
        <taxon>Yamadazyma</taxon>
    </lineage>
</organism>
<reference key="1">
    <citation type="journal article" date="1999" name="Biol. Chem.">
        <title>Xylose utilisation: cloning and characterisation of the xylose reductase from Candida tenuis.</title>
        <authorList>
            <person name="Hacker B."/>
            <person name="Habenicht A."/>
            <person name="Kiess M."/>
            <person name="Mattes R."/>
        </authorList>
    </citation>
    <scope>NUCLEOTIDE SEQUENCE [GENOMIC DNA]</scope>
    <source>
        <strain>CBS 4435</strain>
    </source>
</reference>
<reference key="2">
    <citation type="journal article" date="2002" name="Biochemistry">
        <title>The structure of apo and holo forms of xylose reductase, a dimeric aldo-keto reductase from Candida tenuis.</title>
        <authorList>
            <person name="Kavanagh K.L."/>
            <person name="Klimacek M."/>
            <person name="Nidetzky B."/>
            <person name="Wilson D.K."/>
        </authorList>
    </citation>
    <scope>X-RAY CRYSTALLOGRAPHY (2.1 ANGSTROMS)</scope>
    <scope>SUBUNIT</scope>
</reference>
<reference key="3">
    <citation type="journal article" date="2003" name="Biochem. J.">
        <title>Structure of xylose reductase bound to NAD+ and the basis for single and dual co-substrate specificity in family 2 aldo-keto reductases.</title>
        <authorList>
            <person name="Kavanagh K.L."/>
            <person name="Klimacek M."/>
            <person name="Nidetzky B."/>
            <person name="Wilson D.K."/>
        </authorList>
    </citation>
    <scope>X-RAY CRYSTALLOGRAPHY (1.8 ANGSTROMS) IN COMPLEX WITH NAD</scope>
    <scope>SUBUNIT</scope>
</reference>
<reference key="4">
    <citation type="journal article" date="2005" name="Biochem. J.">
        <title>The coenzyme specificity of Candida tenuis xylose reductase (AKR2B5) explored by site-directed mutagenesis and X-ray crystallography.</title>
        <authorList>
            <person name="Petschacher B."/>
            <person name="Leitgeb S."/>
            <person name="Kavanagh K.L."/>
            <person name="Wilson D.K."/>
            <person name="Nidetzky B."/>
        </authorList>
    </citation>
    <scope>X-RAY CRYSTALLOGRAPHY (2.2 ANGSTROMS) OF MUTANT ARG-274/ASP-276 IN COMPLEX WITH NAD</scope>
    <scope>BIOPHYSICOCHEMICAL PROPERTIES</scope>
    <scope>MUTAGENESIS OF LYS-274; SER-275; ASN-276 AND ARG-280</scope>
</reference>
<reference key="5">
    <citation type="journal article" date="2005" name="FEBS Lett.">
        <title>Fine tuning of coenzyme specificity in family 2 aldo-keto reductases revealed by crystal structures of the Lys-274--&gt;Arg mutant of Candida tenuis xylose reductase (AKR2B5) bound to NAD+ and NADP+.</title>
        <authorList>
            <person name="Leitgeb S."/>
            <person name="Petschacher B."/>
            <person name="Wilson D.K."/>
            <person name="Nidetzky B."/>
        </authorList>
    </citation>
    <scope>X-RAY CRYSTALLOGRAPHY (2.3 ANGSTROMS) OF MUTANT ARG-274 IN COMPLEXES WITH NAD AND NADP</scope>
</reference>
<reference key="6">
    <citation type="journal article" date="2006" name="Biochem. J.">
        <title>Probing the substrate binding site of Candida tenuis xylose reductase (AKR2B5) with site-directed mutagenesis.</title>
        <authorList>
            <person name="Kratzer R."/>
            <person name="Leitgeb S."/>
            <person name="Wilson D.K."/>
            <person name="Nidetzky B."/>
        </authorList>
    </citation>
    <scope>X-RAY CRYSTALLOGRAPHY (2.4 ANGSTROMS) OF 2-322 OF MUTANT ASP-309 IN COMPLEX WITH NAD</scope>
    <scope>BIOPHYSICOCHEMICAL PROPERTIES</scope>
    <scope>MUTAGENESIS OF TRP-24; ASP-51 AND ASN-310</scope>
</reference>
<protein>
    <recommendedName>
        <fullName>NAD(P)H-dependent D-xylose reductase</fullName>
        <shortName>XR</shortName>
        <ecNumber>1.1.1.307</ecNumber>
    </recommendedName>
</protein>
<evidence type="ECO:0000250" key="1"/>
<evidence type="ECO:0000269" key="2">
    <source>
    </source>
</evidence>
<evidence type="ECO:0000269" key="3">
    <source>
    </source>
</evidence>
<evidence type="ECO:0000269" key="4">
    <source>
    </source>
</evidence>
<evidence type="ECO:0000269" key="5">
    <source>
    </source>
</evidence>
<evidence type="ECO:0000305" key="6"/>
<evidence type="ECO:0007829" key="7">
    <source>
        <dbReference type="PDB" id="1K8C"/>
    </source>
</evidence>
<evidence type="ECO:0007829" key="8">
    <source>
        <dbReference type="PDB" id="1MI3"/>
    </source>
</evidence>
<name>XYL1_CANTE</name>
<sequence length="322" mass="36021">MSASIPDIKLSSGHLMPSIGFGCWKLANATAGEQVYQAIKAGYRLFDGAEDYGNEKEVGDGVKRAIDEGLVKREEIFLTSKLWNNYHDPKNVETALNKTLADLKVDYVDLFLIHFPIAFKFVPIEEKYPPGFYCGDGNNFVYEDVPILETWKALEKLVAAGKIKSIGVSNFPGALLLDLLRGATIKPAVLQVEHHPYLQQPKLIEFAQKAGVTITAYSSFGPQSFVEMNQGRALNTPTLFAHDTIKAIAAKYNKTPAEVLLRWAAQRGIAVIPKSNLPERLVQNRSFNTFDLTKEDFEEIAKLDIGLRFNDPWDWDNIPIFV</sequence>
<proteinExistence type="evidence at protein level"/>
<dbReference type="EC" id="1.1.1.307"/>
<dbReference type="EMBL" id="AF074484">
    <property type="protein sequence ID" value="AAC25601.1"/>
    <property type="molecule type" value="Genomic_DNA"/>
</dbReference>
<dbReference type="PDB" id="1JEZ">
    <property type="method" value="X-ray"/>
    <property type="resolution" value="2.20 A"/>
    <property type="chains" value="A/B=1-322"/>
</dbReference>
<dbReference type="PDB" id="1K8C">
    <property type="method" value="X-ray"/>
    <property type="resolution" value="2.10 A"/>
    <property type="chains" value="A/B/C/D=1-322"/>
</dbReference>
<dbReference type="PDB" id="1MI3">
    <property type="method" value="X-ray"/>
    <property type="resolution" value="1.80 A"/>
    <property type="chains" value="A/B/C/D=1-322"/>
</dbReference>
<dbReference type="PDB" id="1R38">
    <property type="method" value="X-ray"/>
    <property type="resolution" value="2.20 A"/>
    <property type="chains" value="A/B/C/D=1-322"/>
</dbReference>
<dbReference type="PDB" id="1SM9">
    <property type="method" value="X-ray"/>
    <property type="resolution" value="2.20 A"/>
    <property type="chains" value="A/B/C/D=1-322"/>
</dbReference>
<dbReference type="PDB" id="1YE4">
    <property type="method" value="X-ray"/>
    <property type="resolution" value="2.40 A"/>
    <property type="chains" value="A/B/C/D=1-322"/>
</dbReference>
<dbReference type="PDB" id="1YE6">
    <property type="method" value="X-ray"/>
    <property type="resolution" value="2.30 A"/>
    <property type="chains" value="A/B/C/D=1-322"/>
</dbReference>
<dbReference type="PDB" id="1Z9A">
    <property type="method" value="X-ray"/>
    <property type="resolution" value="2.40 A"/>
    <property type="chains" value="A/B/C/D=2-322"/>
</dbReference>
<dbReference type="PDBsum" id="1JEZ"/>
<dbReference type="PDBsum" id="1K8C"/>
<dbReference type="PDBsum" id="1MI3"/>
<dbReference type="PDBsum" id="1R38"/>
<dbReference type="PDBsum" id="1SM9"/>
<dbReference type="PDBsum" id="1YE4"/>
<dbReference type="PDBsum" id="1YE6"/>
<dbReference type="PDBsum" id="1Z9A"/>
<dbReference type="SMR" id="O74237"/>
<dbReference type="KEGG" id="ag:AAC25601"/>
<dbReference type="BRENDA" id="1.1.1.307">
    <property type="organism ID" value="1144"/>
</dbReference>
<dbReference type="SABIO-RK" id="O74237"/>
<dbReference type="UniPathway" id="UPA00810"/>
<dbReference type="EvolutionaryTrace" id="O74237"/>
<dbReference type="GO" id="GO:0032866">
    <property type="term" value="F:D-xylose reductase (NADPH) activity"/>
    <property type="evidence" value="ECO:0007669"/>
    <property type="project" value="InterPro"/>
</dbReference>
<dbReference type="GO" id="GO:0042843">
    <property type="term" value="P:D-xylose catabolic process"/>
    <property type="evidence" value="ECO:0007669"/>
    <property type="project" value="UniProtKB-UniPathway"/>
</dbReference>
<dbReference type="CDD" id="cd19113">
    <property type="entry name" value="AKR_AKR2B1-10"/>
    <property type="match status" value="1"/>
</dbReference>
<dbReference type="FunFam" id="3.20.20.100:FF:000007">
    <property type="entry name" value="NAD(P)H-dependent D-xylose reductase xyl1"/>
    <property type="match status" value="1"/>
</dbReference>
<dbReference type="Gene3D" id="3.20.20.100">
    <property type="entry name" value="NADP-dependent oxidoreductase domain"/>
    <property type="match status" value="1"/>
</dbReference>
<dbReference type="InterPro" id="IPR020471">
    <property type="entry name" value="AKR"/>
</dbReference>
<dbReference type="InterPro" id="IPR044486">
    <property type="entry name" value="AKR2B1"/>
</dbReference>
<dbReference type="InterPro" id="IPR018170">
    <property type="entry name" value="Aldo/ket_reductase_CS"/>
</dbReference>
<dbReference type="InterPro" id="IPR023210">
    <property type="entry name" value="NADP_OxRdtase_dom"/>
</dbReference>
<dbReference type="InterPro" id="IPR036812">
    <property type="entry name" value="NADP_OxRdtase_dom_sf"/>
</dbReference>
<dbReference type="PANTHER" id="PTHR11732">
    <property type="entry name" value="ALDO/KETO REDUCTASE"/>
    <property type="match status" value="1"/>
</dbReference>
<dbReference type="Pfam" id="PF00248">
    <property type="entry name" value="Aldo_ket_red"/>
    <property type="match status" value="1"/>
</dbReference>
<dbReference type="PIRSF" id="PIRSF000097">
    <property type="entry name" value="AKR"/>
    <property type="match status" value="1"/>
</dbReference>
<dbReference type="PRINTS" id="PR00069">
    <property type="entry name" value="ALDKETRDTASE"/>
</dbReference>
<dbReference type="SUPFAM" id="SSF51430">
    <property type="entry name" value="NAD(P)-linked oxidoreductase"/>
    <property type="match status" value="1"/>
</dbReference>
<dbReference type="PROSITE" id="PS00798">
    <property type="entry name" value="ALDOKETO_REDUCTASE_1"/>
    <property type="match status" value="1"/>
</dbReference>
<dbReference type="PROSITE" id="PS00062">
    <property type="entry name" value="ALDOKETO_REDUCTASE_2"/>
    <property type="match status" value="1"/>
</dbReference>
<dbReference type="PROSITE" id="PS00063">
    <property type="entry name" value="ALDOKETO_REDUCTASE_3"/>
    <property type="match status" value="1"/>
</dbReference>
<comment type="function">
    <text>Reduces D-xylose into xylitol. Has a preference for NADPH, but can also utilize NADH as cosubstrate.</text>
</comment>
<comment type="catalytic activity">
    <reaction>
        <text>xylitol + NAD(+) = D-xylose + NADH + H(+)</text>
        <dbReference type="Rhea" id="RHEA:27441"/>
        <dbReference type="ChEBI" id="CHEBI:15378"/>
        <dbReference type="ChEBI" id="CHEBI:17151"/>
        <dbReference type="ChEBI" id="CHEBI:53455"/>
        <dbReference type="ChEBI" id="CHEBI:57540"/>
        <dbReference type="ChEBI" id="CHEBI:57945"/>
        <dbReference type="EC" id="1.1.1.307"/>
    </reaction>
</comment>
<comment type="catalytic activity">
    <reaction>
        <text>xylitol + NADP(+) = D-xylose + NADPH + H(+)</text>
        <dbReference type="Rhea" id="RHEA:27445"/>
        <dbReference type="ChEBI" id="CHEBI:15378"/>
        <dbReference type="ChEBI" id="CHEBI:17151"/>
        <dbReference type="ChEBI" id="CHEBI:53455"/>
        <dbReference type="ChEBI" id="CHEBI:57783"/>
        <dbReference type="ChEBI" id="CHEBI:58349"/>
        <dbReference type="EC" id="1.1.1.307"/>
    </reaction>
</comment>
<comment type="biophysicochemical properties">
    <kinetics>
        <KM evidence="4 5">142 mM for xylose</KM>
        <KM evidence="4 5">38 uM for NADH</KM>
        <KM evidence="4 5">3 uM for NADPH</KM>
    </kinetics>
</comment>
<comment type="pathway">
    <text>Carbohydrate metabolism; D-xylose degradation.</text>
</comment>
<comment type="subunit">
    <text evidence="2 3 4 5">Homodimer.</text>
</comment>
<comment type="similarity">
    <text evidence="6">Belongs to the aldo/keto reductase family.</text>
</comment>
<feature type="chain" id="PRO_0000124661" description="NAD(P)H-dependent D-xylose reductase">
    <location>
        <begin position="1"/>
        <end position="322"/>
    </location>
</feature>
<feature type="active site" description="Proton donor">
    <location>
        <position position="52"/>
    </location>
</feature>
<feature type="binding site" evidence="1">
    <location>
        <position position="114"/>
    </location>
    <ligand>
        <name>substrate</name>
    </ligand>
</feature>
<feature type="binding site" evidence="3 4 5">
    <location>
        <begin position="169"/>
        <end position="170"/>
    </location>
    <ligand>
        <name>NAD(+)</name>
        <dbReference type="ChEBI" id="CHEBI:57540"/>
    </ligand>
</feature>
<feature type="binding site" evidence="3 4 5">
    <location>
        <begin position="218"/>
        <end position="227"/>
    </location>
    <ligand>
        <name>NAD(+)</name>
        <dbReference type="ChEBI" id="CHEBI:57540"/>
    </ligand>
</feature>
<feature type="binding site" evidence="3 4 5">
    <location>
        <begin position="274"/>
        <end position="284"/>
    </location>
    <ligand>
        <name>NAD(+)</name>
        <dbReference type="ChEBI" id="CHEBI:57540"/>
    </ligand>
</feature>
<feature type="site" description="Lowers pKa of active site Tyr" evidence="1">
    <location>
        <position position="81"/>
    </location>
</feature>
<feature type="mutagenesis site" description="Strongly reduced affinity for xylose. Reduces NADH-dependent enzyme activity by over 96%." evidence="5">
    <original>W</original>
    <variation>F</variation>
    <variation>Y</variation>
    <location>
        <position position="24"/>
    </location>
</feature>
<feature type="mutagenesis site" description="Slightly reduced enzyme activity." evidence="5">
    <original>D</original>
    <variation>A</variation>
    <location>
        <position position="51"/>
    </location>
</feature>
<feature type="mutagenesis site" description="Reduces enzyme activity about 1000-fold." evidence="4">
    <original>K</original>
    <variation>E</variation>
    <location>
        <position position="274"/>
    </location>
</feature>
<feature type="mutagenesis site" description="Reduces affinity for NAD and NADP." evidence="4">
    <original>K</original>
    <variation>G</variation>
    <variation>M</variation>
    <location>
        <position position="274"/>
    </location>
</feature>
<feature type="mutagenesis site" description="Increases affinity for NAD. Strongly reduced enzyme activity with NADP; when associated with D-276." evidence="4">
    <original>K</original>
    <variation>R</variation>
    <location>
        <position position="274"/>
    </location>
</feature>
<feature type="mutagenesis site" description="Decreases affinity for NAD and NADP." evidence="4">
    <original>S</original>
    <variation>A</variation>
    <location>
        <position position="275"/>
    </location>
</feature>
<feature type="mutagenesis site" description="Increases affinity for NAD. Decreases affinity for NADP. Strongly reduced enzyme activity with NADP; when associated with R-274." evidence="4">
    <original>N</original>
    <variation>D</variation>
    <location>
        <position position="276"/>
    </location>
</feature>
<feature type="mutagenesis site" description="Increases affinity for NAD." evidence="4">
    <original>R</original>
    <variation>H</variation>
    <location>
        <position position="280"/>
    </location>
</feature>
<feature type="mutagenesis site" description="Strongly decreased affinity for xylose." evidence="5">
    <original>N</original>
    <variation>A</variation>
    <variation>D</variation>
    <location>
        <position position="310"/>
    </location>
</feature>
<feature type="strand" evidence="8">
    <location>
        <begin position="7"/>
        <end position="9"/>
    </location>
</feature>
<feature type="strand" evidence="8">
    <location>
        <begin position="15"/>
        <end position="19"/>
    </location>
</feature>
<feature type="helix" evidence="8">
    <location>
        <begin position="28"/>
        <end position="40"/>
    </location>
</feature>
<feature type="strand" evidence="8">
    <location>
        <begin position="45"/>
        <end position="47"/>
    </location>
</feature>
<feature type="helix" evidence="8">
    <location>
        <begin position="50"/>
        <end position="52"/>
    </location>
</feature>
<feature type="helix" evidence="8">
    <location>
        <begin position="55"/>
        <end position="67"/>
    </location>
</feature>
<feature type="helix" evidence="8">
    <location>
        <begin position="73"/>
        <end position="75"/>
    </location>
</feature>
<feature type="strand" evidence="8">
    <location>
        <begin position="77"/>
        <end position="82"/>
    </location>
</feature>
<feature type="helix" evidence="8">
    <location>
        <begin position="84"/>
        <end position="86"/>
    </location>
</feature>
<feature type="helix" evidence="8">
    <location>
        <begin position="89"/>
        <end position="103"/>
    </location>
</feature>
<feature type="strand" evidence="8">
    <location>
        <begin position="108"/>
        <end position="113"/>
    </location>
</feature>
<feature type="turn" evidence="8">
    <location>
        <begin position="124"/>
        <end position="126"/>
    </location>
</feature>
<feature type="helix" evidence="8">
    <location>
        <begin position="147"/>
        <end position="159"/>
    </location>
</feature>
<feature type="strand" evidence="8">
    <location>
        <begin position="162"/>
        <end position="170"/>
    </location>
</feature>
<feature type="helix" evidence="8">
    <location>
        <begin position="173"/>
        <end position="182"/>
    </location>
</feature>
<feature type="strand" evidence="8">
    <location>
        <begin position="189"/>
        <end position="193"/>
    </location>
</feature>
<feature type="helix" evidence="8">
    <location>
        <begin position="201"/>
        <end position="209"/>
    </location>
</feature>
<feature type="strand" evidence="8">
    <location>
        <begin position="213"/>
        <end position="217"/>
    </location>
</feature>
<feature type="turn" evidence="8">
    <location>
        <begin position="219"/>
        <end position="222"/>
    </location>
</feature>
<feature type="helix" evidence="8">
    <location>
        <begin position="223"/>
        <end position="226"/>
    </location>
</feature>
<feature type="turn" evidence="8">
    <location>
        <begin position="227"/>
        <end position="229"/>
    </location>
</feature>
<feature type="helix" evidence="8">
    <location>
        <begin position="231"/>
        <end position="234"/>
    </location>
</feature>
<feature type="helix" evidence="7">
    <location>
        <begin position="239"/>
        <end position="241"/>
    </location>
</feature>
<feature type="helix" evidence="8">
    <location>
        <begin position="243"/>
        <end position="252"/>
    </location>
</feature>
<feature type="helix" evidence="8">
    <location>
        <begin position="256"/>
        <end position="265"/>
    </location>
</feature>
<feature type="turn" evidence="8">
    <location>
        <begin position="266"/>
        <end position="268"/>
    </location>
</feature>
<feature type="helix" evidence="8">
    <location>
        <begin position="278"/>
        <end position="283"/>
    </location>
</feature>
<feature type="helix" evidence="8">
    <location>
        <begin position="294"/>
        <end position="301"/>
    </location>
</feature>
<feature type="helix" evidence="8">
    <location>
        <begin position="313"/>
        <end position="316"/>
    </location>
</feature>
<gene>
    <name type="primary">XYL1</name>
    <name type="synonym">XYLR</name>
</gene>